<gene>
    <name evidence="1" type="primary">atpA</name>
    <name type="ordered locus">NSE_0131</name>
</gene>
<protein>
    <recommendedName>
        <fullName evidence="1">ATP synthase subunit alpha</fullName>
        <ecNumber evidence="1">7.1.2.2</ecNumber>
    </recommendedName>
    <alternativeName>
        <fullName evidence="1">ATP synthase F1 sector subunit alpha</fullName>
    </alternativeName>
    <alternativeName>
        <fullName evidence="1">F-ATPase subunit alpha</fullName>
    </alternativeName>
</protein>
<evidence type="ECO:0000255" key="1">
    <source>
        <dbReference type="HAMAP-Rule" id="MF_01346"/>
    </source>
</evidence>
<comment type="function">
    <text evidence="1">Produces ATP from ADP in the presence of a proton gradient across the membrane. The alpha chain is a regulatory subunit.</text>
</comment>
<comment type="catalytic activity">
    <reaction evidence="1">
        <text>ATP + H2O + 4 H(+)(in) = ADP + phosphate + 5 H(+)(out)</text>
        <dbReference type="Rhea" id="RHEA:57720"/>
        <dbReference type="ChEBI" id="CHEBI:15377"/>
        <dbReference type="ChEBI" id="CHEBI:15378"/>
        <dbReference type="ChEBI" id="CHEBI:30616"/>
        <dbReference type="ChEBI" id="CHEBI:43474"/>
        <dbReference type="ChEBI" id="CHEBI:456216"/>
        <dbReference type="EC" id="7.1.2.2"/>
    </reaction>
</comment>
<comment type="subunit">
    <text evidence="1">F-type ATPases have 2 components, CF(1) - the catalytic core - and CF(0) - the membrane proton channel. CF(1) has five subunits: alpha(3), beta(3), gamma(1), delta(1), epsilon(1). CF(0) has three main subunits: a(1), b(2) and c(9-12). The alpha and beta chains form an alternating ring which encloses part of the gamma chain. CF(1) is attached to CF(0) by a central stalk formed by the gamma and epsilon chains, while a peripheral stalk is formed by the delta and b chains.</text>
</comment>
<comment type="subcellular location">
    <subcellularLocation>
        <location evidence="1">Cell inner membrane</location>
        <topology evidence="1">Peripheral membrane protein</topology>
    </subcellularLocation>
</comment>
<comment type="similarity">
    <text evidence="1">Belongs to the ATPase alpha/beta chains family.</text>
</comment>
<proteinExistence type="inferred from homology"/>
<name>ATPA_NEOSM</name>
<feature type="chain" id="PRO_0000238302" description="ATP synthase subunit alpha">
    <location>
        <begin position="1"/>
        <end position="509"/>
    </location>
</feature>
<feature type="binding site" evidence="1">
    <location>
        <begin position="171"/>
        <end position="178"/>
    </location>
    <ligand>
        <name>ATP</name>
        <dbReference type="ChEBI" id="CHEBI:30616"/>
    </ligand>
</feature>
<feature type="site" description="Required for activity" evidence="1">
    <location>
        <position position="372"/>
    </location>
</feature>
<accession>Q2GER5</accession>
<reference key="1">
    <citation type="journal article" date="2006" name="PLoS Genet.">
        <title>Comparative genomics of emerging human ehrlichiosis agents.</title>
        <authorList>
            <person name="Dunning Hotopp J.C."/>
            <person name="Lin M."/>
            <person name="Madupu R."/>
            <person name="Crabtree J."/>
            <person name="Angiuoli S.V."/>
            <person name="Eisen J.A."/>
            <person name="Seshadri R."/>
            <person name="Ren Q."/>
            <person name="Wu M."/>
            <person name="Utterback T.R."/>
            <person name="Smith S."/>
            <person name="Lewis M."/>
            <person name="Khouri H."/>
            <person name="Zhang C."/>
            <person name="Niu H."/>
            <person name="Lin Q."/>
            <person name="Ohashi N."/>
            <person name="Zhi N."/>
            <person name="Nelson W.C."/>
            <person name="Brinkac L.M."/>
            <person name="Dodson R.J."/>
            <person name="Rosovitz M.J."/>
            <person name="Sundaram J.P."/>
            <person name="Daugherty S.C."/>
            <person name="Davidsen T."/>
            <person name="Durkin A.S."/>
            <person name="Gwinn M.L."/>
            <person name="Haft D.H."/>
            <person name="Selengut J.D."/>
            <person name="Sullivan S.A."/>
            <person name="Zafar N."/>
            <person name="Zhou L."/>
            <person name="Benahmed F."/>
            <person name="Forberger H."/>
            <person name="Halpin R."/>
            <person name="Mulligan S."/>
            <person name="Robinson J."/>
            <person name="White O."/>
            <person name="Rikihisa Y."/>
            <person name="Tettelin H."/>
        </authorList>
    </citation>
    <scope>NUCLEOTIDE SEQUENCE [LARGE SCALE GENOMIC DNA]</scope>
    <source>
        <strain>ATCC VR-367 / Miyayama</strain>
    </source>
</reference>
<dbReference type="EC" id="7.1.2.2" evidence="1"/>
<dbReference type="EMBL" id="CP000237">
    <property type="protein sequence ID" value="ABD45691.1"/>
    <property type="molecule type" value="Genomic_DNA"/>
</dbReference>
<dbReference type="RefSeq" id="WP_011451537.1">
    <property type="nucleotide sequence ID" value="NC_007798.1"/>
</dbReference>
<dbReference type="SMR" id="Q2GER5"/>
<dbReference type="STRING" id="222891.NSE_0131"/>
<dbReference type="KEGG" id="nse:NSE_0131"/>
<dbReference type="eggNOG" id="COG0056">
    <property type="taxonomic scope" value="Bacteria"/>
</dbReference>
<dbReference type="HOGENOM" id="CLU_010091_2_1_5"/>
<dbReference type="OrthoDB" id="9803053at2"/>
<dbReference type="Proteomes" id="UP000001942">
    <property type="component" value="Chromosome"/>
</dbReference>
<dbReference type="GO" id="GO:0005886">
    <property type="term" value="C:plasma membrane"/>
    <property type="evidence" value="ECO:0007669"/>
    <property type="project" value="UniProtKB-SubCell"/>
</dbReference>
<dbReference type="GO" id="GO:0045259">
    <property type="term" value="C:proton-transporting ATP synthase complex"/>
    <property type="evidence" value="ECO:0007669"/>
    <property type="project" value="UniProtKB-KW"/>
</dbReference>
<dbReference type="GO" id="GO:0043531">
    <property type="term" value="F:ADP binding"/>
    <property type="evidence" value="ECO:0007669"/>
    <property type="project" value="TreeGrafter"/>
</dbReference>
<dbReference type="GO" id="GO:0005524">
    <property type="term" value="F:ATP binding"/>
    <property type="evidence" value="ECO:0007669"/>
    <property type="project" value="UniProtKB-UniRule"/>
</dbReference>
<dbReference type="GO" id="GO:0046933">
    <property type="term" value="F:proton-transporting ATP synthase activity, rotational mechanism"/>
    <property type="evidence" value="ECO:0007669"/>
    <property type="project" value="UniProtKB-UniRule"/>
</dbReference>
<dbReference type="CDD" id="cd18113">
    <property type="entry name" value="ATP-synt_F1_alpha_C"/>
    <property type="match status" value="1"/>
</dbReference>
<dbReference type="CDD" id="cd18116">
    <property type="entry name" value="ATP-synt_F1_alpha_N"/>
    <property type="match status" value="1"/>
</dbReference>
<dbReference type="CDD" id="cd01132">
    <property type="entry name" value="F1-ATPase_alpha_CD"/>
    <property type="match status" value="1"/>
</dbReference>
<dbReference type="FunFam" id="1.20.150.20:FF:000001">
    <property type="entry name" value="ATP synthase subunit alpha"/>
    <property type="match status" value="1"/>
</dbReference>
<dbReference type="FunFam" id="3.40.50.300:FF:000002">
    <property type="entry name" value="ATP synthase subunit alpha"/>
    <property type="match status" value="1"/>
</dbReference>
<dbReference type="Gene3D" id="2.40.30.20">
    <property type="match status" value="1"/>
</dbReference>
<dbReference type="Gene3D" id="1.20.150.20">
    <property type="entry name" value="ATP synthase alpha/beta chain, C-terminal domain"/>
    <property type="match status" value="1"/>
</dbReference>
<dbReference type="Gene3D" id="3.40.50.300">
    <property type="entry name" value="P-loop containing nucleotide triphosphate hydrolases"/>
    <property type="match status" value="1"/>
</dbReference>
<dbReference type="HAMAP" id="MF_01346">
    <property type="entry name" value="ATP_synth_alpha_bact"/>
    <property type="match status" value="1"/>
</dbReference>
<dbReference type="InterPro" id="IPR023366">
    <property type="entry name" value="ATP_synth_asu-like_sf"/>
</dbReference>
<dbReference type="InterPro" id="IPR000793">
    <property type="entry name" value="ATP_synth_asu_C"/>
</dbReference>
<dbReference type="InterPro" id="IPR038376">
    <property type="entry name" value="ATP_synth_asu_C_sf"/>
</dbReference>
<dbReference type="InterPro" id="IPR033732">
    <property type="entry name" value="ATP_synth_F1_a_nt-bd_dom"/>
</dbReference>
<dbReference type="InterPro" id="IPR005294">
    <property type="entry name" value="ATP_synth_F1_asu"/>
</dbReference>
<dbReference type="InterPro" id="IPR020003">
    <property type="entry name" value="ATPase_a/bsu_AS"/>
</dbReference>
<dbReference type="InterPro" id="IPR004100">
    <property type="entry name" value="ATPase_F1/V1/A1_a/bsu_N"/>
</dbReference>
<dbReference type="InterPro" id="IPR036121">
    <property type="entry name" value="ATPase_F1/V1/A1_a/bsu_N_sf"/>
</dbReference>
<dbReference type="InterPro" id="IPR000194">
    <property type="entry name" value="ATPase_F1/V1/A1_a/bsu_nucl-bd"/>
</dbReference>
<dbReference type="InterPro" id="IPR027417">
    <property type="entry name" value="P-loop_NTPase"/>
</dbReference>
<dbReference type="NCBIfam" id="TIGR00962">
    <property type="entry name" value="atpA"/>
    <property type="match status" value="1"/>
</dbReference>
<dbReference type="NCBIfam" id="NF009884">
    <property type="entry name" value="PRK13343.1"/>
    <property type="match status" value="1"/>
</dbReference>
<dbReference type="PANTHER" id="PTHR48082">
    <property type="entry name" value="ATP SYNTHASE SUBUNIT ALPHA, MITOCHONDRIAL"/>
    <property type="match status" value="1"/>
</dbReference>
<dbReference type="PANTHER" id="PTHR48082:SF2">
    <property type="entry name" value="ATP SYNTHASE SUBUNIT ALPHA, MITOCHONDRIAL"/>
    <property type="match status" value="1"/>
</dbReference>
<dbReference type="Pfam" id="PF00006">
    <property type="entry name" value="ATP-synt_ab"/>
    <property type="match status" value="1"/>
</dbReference>
<dbReference type="Pfam" id="PF00306">
    <property type="entry name" value="ATP-synt_ab_C"/>
    <property type="match status" value="1"/>
</dbReference>
<dbReference type="Pfam" id="PF02874">
    <property type="entry name" value="ATP-synt_ab_N"/>
    <property type="match status" value="1"/>
</dbReference>
<dbReference type="PIRSF" id="PIRSF039088">
    <property type="entry name" value="F_ATPase_subunit_alpha"/>
    <property type="match status" value="1"/>
</dbReference>
<dbReference type="SUPFAM" id="SSF47917">
    <property type="entry name" value="C-terminal domain of alpha and beta subunits of F1 ATP synthase"/>
    <property type="match status" value="1"/>
</dbReference>
<dbReference type="SUPFAM" id="SSF50615">
    <property type="entry name" value="N-terminal domain of alpha and beta subunits of F1 ATP synthase"/>
    <property type="match status" value="1"/>
</dbReference>
<dbReference type="SUPFAM" id="SSF52540">
    <property type="entry name" value="P-loop containing nucleoside triphosphate hydrolases"/>
    <property type="match status" value="1"/>
</dbReference>
<dbReference type="PROSITE" id="PS00152">
    <property type="entry name" value="ATPASE_ALPHA_BETA"/>
    <property type="match status" value="1"/>
</dbReference>
<sequence length="509" mass="55769">MSLDVNASEVLRIIKEKIKDFDQQIFSEEIGEVISVKDGVVIACGLENAEFNEKVVFPNGEIGLIQSIEYDHVGIVILTNTQDIKEGDTVRRTKEALRIPVGKKLLGRVIDPLGNPLDGAGQIFADAYSPIEVKAPGILDRQSVKEPLQTGIKVIDLLIPIGRGQRELIIGDRQTGKTTIALDSIINQRDINKNLPDEKKLYCVYVAIGQKCSTVARIMKTLQEQGAMDYTTIVLAGASDSAQSQFLAPYAGCSIGEYFRDNGMHCLIVYDDLSKHAVAYRQMSLLLRRPPGREAYPGDVFYIHSRLLERAAKMSDKHGAGSLTALPIIETQAGDVSAYIPTNVISITDGQIFLETELFNKGVKPAVNVGLSVSRVGSAAQIKAIKQVARSIKLELAQYREMEAFAQFGADLDETTQALLEKGKKLTELLKQNQHETLPVEEQVVLMFAANEGYFDNIDVTGISTAAKNLLGSFRLYHRDLLEDIKEKSIIGDLASLSSALQGCKTTNA</sequence>
<organism>
    <name type="scientific">Neorickettsia sennetsu (strain ATCC VR-367 / Miyayama)</name>
    <name type="common">Ehrlichia sennetsu</name>
    <dbReference type="NCBI Taxonomy" id="222891"/>
    <lineage>
        <taxon>Bacteria</taxon>
        <taxon>Pseudomonadati</taxon>
        <taxon>Pseudomonadota</taxon>
        <taxon>Alphaproteobacteria</taxon>
        <taxon>Rickettsiales</taxon>
        <taxon>Anaplasmataceae</taxon>
        <taxon>Neorickettsia</taxon>
    </lineage>
</organism>
<keyword id="KW-0066">ATP synthesis</keyword>
<keyword id="KW-0067">ATP-binding</keyword>
<keyword id="KW-0997">Cell inner membrane</keyword>
<keyword id="KW-1003">Cell membrane</keyword>
<keyword id="KW-0139">CF(1)</keyword>
<keyword id="KW-0375">Hydrogen ion transport</keyword>
<keyword id="KW-0406">Ion transport</keyword>
<keyword id="KW-0472">Membrane</keyword>
<keyword id="KW-0547">Nucleotide-binding</keyword>
<keyword id="KW-1278">Translocase</keyword>
<keyword id="KW-0813">Transport</keyword>